<accession>Q30SS1</accession>
<evidence type="ECO:0000255" key="1">
    <source>
        <dbReference type="HAMAP-Rule" id="MF_00378"/>
    </source>
</evidence>
<gene>
    <name evidence="1" type="primary">xseA</name>
    <name type="ordered locus">Suden_0681</name>
</gene>
<reference key="1">
    <citation type="journal article" date="2008" name="Appl. Environ. Microbiol.">
        <title>Genome of the epsilonproteobacterial chemolithoautotroph Sulfurimonas denitrificans.</title>
        <authorList>
            <person name="Sievert S.M."/>
            <person name="Scott K.M."/>
            <person name="Klotz M.G."/>
            <person name="Chain P.S.G."/>
            <person name="Hauser L.J."/>
            <person name="Hemp J."/>
            <person name="Huegler M."/>
            <person name="Land M."/>
            <person name="Lapidus A."/>
            <person name="Larimer F.W."/>
            <person name="Lucas S."/>
            <person name="Malfatti S.A."/>
            <person name="Meyer F."/>
            <person name="Paulsen I.T."/>
            <person name="Ren Q."/>
            <person name="Simon J."/>
            <person name="Bailey K."/>
            <person name="Diaz E."/>
            <person name="Fitzpatrick K.A."/>
            <person name="Glover B."/>
            <person name="Gwatney N."/>
            <person name="Korajkic A."/>
            <person name="Long A."/>
            <person name="Mobberley J.M."/>
            <person name="Pantry S.N."/>
            <person name="Pazder G."/>
            <person name="Peterson S."/>
            <person name="Quintanilla J.D."/>
            <person name="Sprinkle R."/>
            <person name="Stephens J."/>
            <person name="Thomas P."/>
            <person name="Vaughn R."/>
            <person name="Weber M.J."/>
            <person name="Wooten L.L."/>
        </authorList>
    </citation>
    <scope>NUCLEOTIDE SEQUENCE [LARGE SCALE GENOMIC DNA]</scope>
    <source>
        <strain>ATCC 33889 / DSM 1251</strain>
    </source>
</reference>
<feature type="chain" id="PRO_0000303833" description="Exodeoxyribonuclease 7 large subunit">
    <location>
        <begin position="1"/>
        <end position="416"/>
    </location>
</feature>
<keyword id="KW-0963">Cytoplasm</keyword>
<keyword id="KW-0269">Exonuclease</keyword>
<keyword id="KW-0378">Hydrolase</keyword>
<keyword id="KW-0540">Nuclease</keyword>
<keyword id="KW-1185">Reference proteome</keyword>
<proteinExistence type="inferred from homology"/>
<sequence>MYTLSVSSLNEQIKALLEESFSRVLVEGELSRITFHSSGHIYFTLKDENSTIKAVIFKANAAKLKFQLQEGLKVILDGAITLYKPRGEYQINCFSISPAGHGALALAYEQLKNRLASKGYFESSRKKQLPKFPKRIALITSATGAAVADMLRVAMSRYRAIEIDIYDVLVQGDNAAPSIIRALSLADTKGYDIIVLGRGGGSIEDLWAFNEEIVADAIFSAITPIISAVGHEIDWVISDFVADLRAPTPSAAMEMCLPDEKELYQFIDSLVARYEQMISQKLYGVKQELEHISRLYQDHSIEKKISYKLEEIAQLKLSFTNSIYFKMQSFNKEVESIKIRFPNAIQSRINIVQNQVLTLQKMLESNHPRLKTKKGFAQISKDSKVIDIESLIVDEVFDLMSDRVVISAKVINKKNI</sequence>
<comment type="function">
    <text evidence="1">Bidirectionally degrades single-stranded DNA into large acid-insoluble oligonucleotides, which are then degraded further into small acid-soluble oligonucleotides.</text>
</comment>
<comment type="catalytic activity">
    <reaction evidence="1">
        <text>Exonucleolytic cleavage in either 5'- to 3'- or 3'- to 5'-direction to yield nucleoside 5'-phosphates.</text>
        <dbReference type="EC" id="3.1.11.6"/>
    </reaction>
</comment>
<comment type="subunit">
    <text evidence="1">Heterooligomer composed of large and small subunits.</text>
</comment>
<comment type="subcellular location">
    <subcellularLocation>
        <location evidence="1">Cytoplasm</location>
    </subcellularLocation>
</comment>
<comment type="similarity">
    <text evidence="1">Belongs to the XseA family.</text>
</comment>
<name>EX7L_SULDN</name>
<protein>
    <recommendedName>
        <fullName evidence="1">Exodeoxyribonuclease 7 large subunit</fullName>
        <ecNumber evidence="1">3.1.11.6</ecNumber>
    </recommendedName>
    <alternativeName>
        <fullName evidence="1">Exodeoxyribonuclease VII large subunit</fullName>
        <shortName evidence="1">Exonuclease VII large subunit</shortName>
    </alternativeName>
</protein>
<organism>
    <name type="scientific">Sulfurimonas denitrificans (strain ATCC 33889 / DSM 1251)</name>
    <name type="common">Thiomicrospira denitrificans (strain ATCC 33889 / DSM 1251)</name>
    <dbReference type="NCBI Taxonomy" id="326298"/>
    <lineage>
        <taxon>Bacteria</taxon>
        <taxon>Pseudomonadati</taxon>
        <taxon>Campylobacterota</taxon>
        <taxon>Epsilonproteobacteria</taxon>
        <taxon>Campylobacterales</taxon>
        <taxon>Sulfurimonadaceae</taxon>
        <taxon>Sulfurimonas</taxon>
    </lineage>
</organism>
<dbReference type="EC" id="3.1.11.6" evidence="1"/>
<dbReference type="EMBL" id="CP000153">
    <property type="protein sequence ID" value="ABB43960.1"/>
    <property type="molecule type" value="Genomic_DNA"/>
</dbReference>
<dbReference type="RefSeq" id="WP_011372314.1">
    <property type="nucleotide sequence ID" value="NC_007575.1"/>
</dbReference>
<dbReference type="SMR" id="Q30SS1"/>
<dbReference type="STRING" id="326298.Suden_0681"/>
<dbReference type="KEGG" id="tdn:Suden_0681"/>
<dbReference type="eggNOG" id="COG1570">
    <property type="taxonomic scope" value="Bacteria"/>
</dbReference>
<dbReference type="HOGENOM" id="CLU_023625_2_0_7"/>
<dbReference type="OrthoDB" id="9802795at2"/>
<dbReference type="Proteomes" id="UP000002714">
    <property type="component" value="Chromosome"/>
</dbReference>
<dbReference type="GO" id="GO:0005737">
    <property type="term" value="C:cytoplasm"/>
    <property type="evidence" value="ECO:0007669"/>
    <property type="project" value="UniProtKB-SubCell"/>
</dbReference>
<dbReference type="GO" id="GO:0009318">
    <property type="term" value="C:exodeoxyribonuclease VII complex"/>
    <property type="evidence" value="ECO:0007669"/>
    <property type="project" value="InterPro"/>
</dbReference>
<dbReference type="GO" id="GO:0008855">
    <property type="term" value="F:exodeoxyribonuclease VII activity"/>
    <property type="evidence" value="ECO:0007669"/>
    <property type="project" value="UniProtKB-UniRule"/>
</dbReference>
<dbReference type="GO" id="GO:0003676">
    <property type="term" value="F:nucleic acid binding"/>
    <property type="evidence" value="ECO:0007669"/>
    <property type="project" value="InterPro"/>
</dbReference>
<dbReference type="GO" id="GO:0006308">
    <property type="term" value="P:DNA catabolic process"/>
    <property type="evidence" value="ECO:0007669"/>
    <property type="project" value="UniProtKB-UniRule"/>
</dbReference>
<dbReference type="CDD" id="cd04489">
    <property type="entry name" value="ExoVII_LU_OBF"/>
    <property type="match status" value="1"/>
</dbReference>
<dbReference type="HAMAP" id="MF_00378">
    <property type="entry name" value="Exonuc_7_L"/>
    <property type="match status" value="1"/>
</dbReference>
<dbReference type="InterPro" id="IPR003753">
    <property type="entry name" value="Exonuc_VII_L"/>
</dbReference>
<dbReference type="InterPro" id="IPR020579">
    <property type="entry name" value="Exonuc_VII_lsu_C"/>
</dbReference>
<dbReference type="InterPro" id="IPR025824">
    <property type="entry name" value="OB-fold_nuc-bd_dom"/>
</dbReference>
<dbReference type="NCBIfam" id="TIGR00237">
    <property type="entry name" value="xseA"/>
    <property type="match status" value="1"/>
</dbReference>
<dbReference type="PANTHER" id="PTHR30008">
    <property type="entry name" value="EXODEOXYRIBONUCLEASE 7 LARGE SUBUNIT"/>
    <property type="match status" value="1"/>
</dbReference>
<dbReference type="PANTHER" id="PTHR30008:SF0">
    <property type="entry name" value="EXODEOXYRIBONUCLEASE 7 LARGE SUBUNIT"/>
    <property type="match status" value="1"/>
</dbReference>
<dbReference type="Pfam" id="PF02601">
    <property type="entry name" value="Exonuc_VII_L"/>
    <property type="match status" value="1"/>
</dbReference>
<dbReference type="Pfam" id="PF13742">
    <property type="entry name" value="tRNA_anti_2"/>
    <property type="match status" value="1"/>
</dbReference>